<feature type="chain" id="PRO_0000099341" description="Protein A49">
    <location>
        <begin position="1"/>
        <end position="162"/>
    </location>
</feature>
<protein>
    <recommendedName>
        <fullName>Protein A49</fullName>
    </recommendedName>
</protein>
<name>A49_VACCA</name>
<organismHost>
    <name type="scientific">Homo sapiens</name>
    <name type="common">Human</name>
    <dbReference type="NCBI Taxonomy" id="9606"/>
</organismHost>
<sequence>MDEAYYSGNLESVLGYVSDMHTELASISQLVIAKIETIDNDILNKDIVNFIMCRSNLDNPFISFLDTVYTIIDQEIYQTELINSLDDNEIIDCIVNKFMSFYKDNLENIVDAIITLKYIMNNPDFKTTYAEVLGSRIADIDIKQVIRENILQLSNNIRERYL</sequence>
<reference key="1">
    <citation type="journal article" date="1998" name="Virology">
        <title>The complete genomic sequence of the modified vaccinia Ankara strain: comparison with other orthopoxviruses.</title>
        <authorList>
            <person name="Antoine G."/>
            <person name="Scheiflinger F."/>
            <person name="Dorner F."/>
            <person name="Falkner F.G."/>
        </authorList>
    </citation>
    <scope>NUCLEOTIDE SEQUENCE [LARGE SCALE GENOMIC DNA]</scope>
</reference>
<reference key="2">
    <citation type="submission" date="2004-04" db="EMBL/GenBank/DDBJ databases">
        <authorList>
            <person name="Esposito J.J."/>
            <person name="Frace M."/>
            <person name="Sammons S.A."/>
            <person name="Olsen-Rasmussen M.S."/>
            <person name="Osborne J."/>
            <person name="Khristova M."/>
            <person name="Wohlhueter R.M."/>
        </authorList>
    </citation>
    <scope>NUCLEOTIDE SEQUENCE [LARGE SCALE GENOMIC DNA]</scope>
    <source>
        <strain>Isolate Acambis 3000</strain>
    </source>
</reference>
<proteinExistence type="inferred from homology"/>
<evidence type="ECO:0000305" key="1"/>
<dbReference type="EMBL" id="U94848">
    <property type="protein sequence ID" value="AAB96540.1"/>
    <property type="molecule type" value="Genomic_DNA"/>
</dbReference>
<dbReference type="EMBL" id="AY603355">
    <property type="protein sequence ID" value="AAT10560.1"/>
    <property type="molecule type" value="Genomic_DNA"/>
</dbReference>
<dbReference type="PIR" id="T37435">
    <property type="entry name" value="T37435"/>
</dbReference>
<dbReference type="SMR" id="O57249"/>
<dbReference type="Proteomes" id="UP000159908">
    <property type="component" value="Segment"/>
</dbReference>
<dbReference type="Proteomes" id="UP000172909">
    <property type="component" value="Segment"/>
</dbReference>
<dbReference type="InterPro" id="IPR009473">
    <property type="entry name" value="Orthopox_A49"/>
</dbReference>
<dbReference type="Pfam" id="PF06489">
    <property type="entry name" value="Orthopox_A49R"/>
    <property type="match status" value="1"/>
</dbReference>
<organism>
    <name type="scientific">Vaccinia virus (strain Ankara)</name>
    <name type="common">VACV</name>
    <dbReference type="NCBI Taxonomy" id="126794"/>
    <lineage>
        <taxon>Viruses</taxon>
        <taxon>Varidnaviria</taxon>
        <taxon>Bamfordvirae</taxon>
        <taxon>Nucleocytoviricota</taxon>
        <taxon>Pokkesviricetes</taxon>
        <taxon>Chitovirales</taxon>
        <taxon>Poxviridae</taxon>
        <taxon>Chordopoxvirinae</taxon>
        <taxon>Orthopoxvirus</taxon>
        <taxon>Vaccinia virus</taxon>
    </lineage>
</organism>
<comment type="similarity">
    <text evidence="1">Belongs to the poxviridae A49 protein family.</text>
</comment>
<gene>
    <name type="ordered locus">MVA162R</name>
    <name type="ordered locus">ACAM3000_MVA_162</name>
</gene>
<accession>O57249</accession>